<proteinExistence type="evidence at protein level"/>
<organism>
    <name type="scientific">Arabidopsis thaliana</name>
    <name type="common">Mouse-ear cress</name>
    <dbReference type="NCBI Taxonomy" id="3702"/>
    <lineage>
        <taxon>Eukaryota</taxon>
        <taxon>Viridiplantae</taxon>
        <taxon>Streptophyta</taxon>
        <taxon>Embryophyta</taxon>
        <taxon>Tracheophyta</taxon>
        <taxon>Spermatophyta</taxon>
        <taxon>Magnoliopsida</taxon>
        <taxon>eudicotyledons</taxon>
        <taxon>Gunneridae</taxon>
        <taxon>Pentapetalae</taxon>
        <taxon>rosids</taxon>
        <taxon>malvids</taxon>
        <taxon>Brassicales</taxon>
        <taxon>Brassicaceae</taxon>
        <taxon>Camelineae</taxon>
        <taxon>Arabidopsis</taxon>
    </lineage>
</organism>
<keyword id="KW-0025">Alternative splicing</keyword>
<keyword id="KW-0238">DNA-binding</keyword>
<keyword id="KW-0479">Metal-binding</keyword>
<keyword id="KW-0507">mRNA processing</keyword>
<keyword id="KW-0508">mRNA splicing</keyword>
<keyword id="KW-0539">Nucleus</keyword>
<keyword id="KW-1185">Reference proteome</keyword>
<keyword id="KW-0677">Repeat</keyword>
<keyword id="KW-0694">RNA-binding</keyword>
<keyword id="KW-0747">Spliceosome</keyword>
<keyword id="KW-0862">Zinc</keyword>
<keyword id="KW-0863">Zinc-finger</keyword>
<protein>
    <recommendedName>
        <fullName>Splicing factor U2af small subunit A</fullName>
    </recommendedName>
    <alternativeName>
        <fullName evidence="9">U2 auxiliary factor 35 kDa subunit A</fullName>
    </alternativeName>
    <alternativeName>
        <fullName evidence="9">U2 small nuclear ribonucleoprotein auxiliary factor small subunit A</fullName>
        <shortName evidence="9">U2 snRNP auxiliary factor small subunit A</shortName>
    </alternativeName>
    <alternativeName>
        <fullName evidence="10">Zinc finger CCCH domain-containing protein 8</fullName>
        <shortName evidence="10">AtC3H8</shortName>
    </alternativeName>
</protein>
<name>U2AFA_ARATH</name>
<accession>Q9S709</accession>
<accession>Q945S1</accession>
<evidence type="ECO:0000250" key="1"/>
<evidence type="ECO:0000255" key="2">
    <source>
        <dbReference type="PROSITE-ProRule" id="PRU00176"/>
    </source>
</evidence>
<evidence type="ECO:0000255" key="3">
    <source>
        <dbReference type="PROSITE-ProRule" id="PRU00723"/>
    </source>
</evidence>
<evidence type="ECO:0000256" key="4">
    <source>
        <dbReference type="SAM" id="MobiDB-lite"/>
    </source>
</evidence>
<evidence type="ECO:0000269" key="5">
    <source>
    </source>
</evidence>
<evidence type="ECO:0000269" key="6">
    <source>
    </source>
</evidence>
<evidence type="ECO:0000269" key="7">
    <source>
    </source>
</evidence>
<evidence type="ECO:0000269" key="8">
    <source>
    </source>
</evidence>
<evidence type="ECO:0000303" key="9">
    <source>
    </source>
</evidence>
<evidence type="ECO:0000303" key="10">
    <source>
    </source>
</evidence>
<evidence type="ECO:0000303" key="11">
    <source>
    </source>
</evidence>
<evidence type="ECO:0000305" key="12"/>
<evidence type="ECO:0000312" key="13">
    <source>
        <dbReference type="Araport" id="AT1G27650"/>
    </source>
</evidence>
<evidence type="ECO:0000312" key="14">
    <source>
        <dbReference type="EMBL" id="AAD46002.1"/>
    </source>
</evidence>
<evidence type="ECO:0000312" key="15">
    <source>
        <dbReference type="EMBL" id="AAF24943.1"/>
    </source>
</evidence>
<feature type="chain" id="PRO_0000371961" description="Splicing factor U2af small subunit A">
    <location>
        <begin position="1"/>
        <end position="296"/>
    </location>
</feature>
<feature type="domain" description="RRM" evidence="2">
    <location>
        <begin position="44"/>
        <end position="146"/>
    </location>
</feature>
<feature type="zinc finger region" description="C3H1-type 1" evidence="3">
    <location>
        <begin position="12"/>
        <end position="40"/>
    </location>
</feature>
<feature type="zinc finger region" description="C3H1-type 2" evidence="3">
    <location>
        <begin position="148"/>
        <end position="175"/>
    </location>
</feature>
<feature type="region of interest" description="Disordered" evidence="4">
    <location>
        <begin position="191"/>
        <end position="296"/>
    </location>
</feature>
<feature type="compositionally biased region" description="Basic residues" evidence="4">
    <location>
        <begin position="191"/>
        <end position="202"/>
    </location>
</feature>
<feature type="compositionally biased region" description="Basic and acidic residues" evidence="4">
    <location>
        <begin position="209"/>
        <end position="254"/>
    </location>
</feature>
<feature type="compositionally biased region" description="Basic and acidic residues" evidence="4">
    <location>
        <begin position="272"/>
        <end position="296"/>
    </location>
</feature>
<feature type="sequence conflict" description="In Ref. 1; AAL06331." evidence="12" ref="1">
    <original>N</original>
    <variation>Y</variation>
    <location>
        <position position="163"/>
    </location>
</feature>
<feature type="sequence conflict" description="In Ref. 1; AAL06331." evidence="12" ref="1">
    <original>F</original>
    <variation>S</variation>
    <location>
        <position position="185"/>
    </location>
</feature>
<dbReference type="EMBL" id="AF409139">
    <property type="protein sequence ID" value="AAL06331.1"/>
    <property type="molecule type" value="mRNA"/>
</dbReference>
<dbReference type="EMBL" id="AC005916">
    <property type="protein sequence ID" value="AAD46002.1"/>
    <property type="molecule type" value="Genomic_DNA"/>
</dbReference>
<dbReference type="EMBL" id="AC012375">
    <property type="protein sequence ID" value="AAF24943.1"/>
    <property type="molecule type" value="Genomic_DNA"/>
</dbReference>
<dbReference type="EMBL" id="CP002684">
    <property type="protein sequence ID" value="AEE30858.1"/>
    <property type="molecule type" value="Genomic_DNA"/>
</dbReference>
<dbReference type="EMBL" id="AF344324">
    <property type="protein sequence ID" value="AAK06875.1"/>
    <property type="molecule type" value="mRNA"/>
</dbReference>
<dbReference type="EMBL" id="AY065202">
    <property type="protein sequence ID" value="AAL38678.1"/>
    <property type="molecule type" value="mRNA"/>
</dbReference>
<dbReference type="EMBL" id="AY090343">
    <property type="protein sequence ID" value="AAL91249.1"/>
    <property type="molecule type" value="mRNA"/>
</dbReference>
<dbReference type="EMBL" id="AY096507">
    <property type="protein sequence ID" value="AAM20157.1"/>
    <property type="molecule type" value="mRNA"/>
</dbReference>
<dbReference type="EMBL" id="AY122894">
    <property type="protein sequence ID" value="AAM67427.1"/>
    <property type="molecule type" value="mRNA"/>
</dbReference>
<dbReference type="EMBL" id="AY088540">
    <property type="protein sequence ID" value="AAM66073.1"/>
    <property type="molecule type" value="mRNA"/>
</dbReference>
<dbReference type="RefSeq" id="NP_174086.1">
    <molecule id="Q9S709-1"/>
    <property type="nucleotide sequence ID" value="NM_102530.3"/>
</dbReference>
<dbReference type="SMR" id="Q9S709"/>
<dbReference type="BioGRID" id="24892">
    <property type="interactions" value="12"/>
</dbReference>
<dbReference type="FunCoup" id="Q9S709">
    <property type="interactions" value="4003"/>
</dbReference>
<dbReference type="IntAct" id="Q9S709">
    <property type="interactions" value="6"/>
</dbReference>
<dbReference type="STRING" id="3702.Q9S709"/>
<dbReference type="iPTMnet" id="Q9S709"/>
<dbReference type="PaxDb" id="3702-AT1G27650.1"/>
<dbReference type="ProteomicsDB" id="234642">
    <molecule id="Q9S709-1"/>
</dbReference>
<dbReference type="EnsemblPlants" id="AT1G27650.1">
    <molecule id="Q9S709-1"/>
    <property type="protein sequence ID" value="AT1G27650.1"/>
    <property type="gene ID" value="AT1G27650"/>
</dbReference>
<dbReference type="Gramene" id="AT1G27650.1">
    <molecule id="Q9S709-1"/>
    <property type="protein sequence ID" value="AT1G27650.1"/>
    <property type="gene ID" value="AT1G27650"/>
</dbReference>
<dbReference type="KEGG" id="ath:AT1G27650"/>
<dbReference type="Araport" id="AT1G27650"/>
<dbReference type="TAIR" id="AT1G27650">
    <property type="gene designation" value="ATU2AF35A"/>
</dbReference>
<dbReference type="eggNOG" id="KOG2202">
    <property type="taxonomic scope" value="Eukaryota"/>
</dbReference>
<dbReference type="HOGENOM" id="CLU_059852_2_1_1"/>
<dbReference type="InParanoid" id="Q9S709"/>
<dbReference type="OMA" id="NPPMAVA"/>
<dbReference type="OrthoDB" id="423462at2759"/>
<dbReference type="PhylomeDB" id="Q9S709"/>
<dbReference type="PRO" id="PR:Q9S709"/>
<dbReference type="Proteomes" id="UP000006548">
    <property type="component" value="Chromosome 1"/>
</dbReference>
<dbReference type="ExpressionAtlas" id="Q9S709">
    <property type="expression patterns" value="baseline and differential"/>
</dbReference>
<dbReference type="GO" id="GO:0016607">
    <property type="term" value="C:nuclear speck"/>
    <property type="evidence" value="ECO:0000314"/>
    <property type="project" value="UniProtKB"/>
</dbReference>
<dbReference type="GO" id="GO:0005634">
    <property type="term" value="C:nucleus"/>
    <property type="evidence" value="ECO:0000314"/>
    <property type="project" value="TAIR"/>
</dbReference>
<dbReference type="GO" id="GO:0005681">
    <property type="term" value="C:spliceosomal complex"/>
    <property type="evidence" value="ECO:0007669"/>
    <property type="project" value="UniProtKB-KW"/>
</dbReference>
<dbReference type="GO" id="GO:0089701">
    <property type="term" value="C:U2AF complex"/>
    <property type="evidence" value="ECO:0007669"/>
    <property type="project" value="InterPro"/>
</dbReference>
<dbReference type="GO" id="GO:0003677">
    <property type="term" value="F:DNA binding"/>
    <property type="evidence" value="ECO:0007669"/>
    <property type="project" value="UniProtKB-KW"/>
</dbReference>
<dbReference type="GO" id="GO:0003723">
    <property type="term" value="F:RNA binding"/>
    <property type="evidence" value="ECO:0007669"/>
    <property type="project" value="UniProtKB-KW"/>
</dbReference>
<dbReference type="GO" id="GO:0008270">
    <property type="term" value="F:zinc ion binding"/>
    <property type="evidence" value="ECO:0007669"/>
    <property type="project" value="UniProtKB-KW"/>
</dbReference>
<dbReference type="GO" id="GO:0000398">
    <property type="term" value="P:mRNA splicing, via spliceosome"/>
    <property type="evidence" value="ECO:0007669"/>
    <property type="project" value="InterPro"/>
</dbReference>
<dbReference type="GO" id="GO:0048573">
    <property type="term" value="P:photoperiodism, flowering"/>
    <property type="evidence" value="ECO:0000315"/>
    <property type="project" value="TAIR"/>
</dbReference>
<dbReference type="CDD" id="cd12539">
    <property type="entry name" value="RRM_U2AF35B"/>
    <property type="match status" value="1"/>
</dbReference>
<dbReference type="FunFam" id="3.30.70.330:FF:000122">
    <property type="entry name" value="Splicing factor U2AF small subunit"/>
    <property type="match status" value="1"/>
</dbReference>
<dbReference type="Gene3D" id="3.30.70.330">
    <property type="match status" value="1"/>
</dbReference>
<dbReference type="InterPro" id="IPR012677">
    <property type="entry name" value="Nucleotide-bd_a/b_plait_sf"/>
</dbReference>
<dbReference type="InterPro" id="IPR035979">
    <property type="entry name" value="RBD_domain_sf"/>
</dbReference>
<dbReference type="InterPro" id="IPR000504">
    <property type="entry name" value="RRM_dom"/>
</dbReference>
<dbReference type="InterPro" id="IPR003954">
    <property type="entry name" value="RRM_dom_euk"/>
</dbReference>
<dbReference type="InterPro" id="IPR009145">
    <property type="entry name" value="U2AF_small"/>
</dbReference>
<dbReference type="InterPro" id="IPR000571">
    <property type="entry name" value="Znf_CCCH"/>
</dbReference>
<dbReference type="PANTHER" id="PTHR12620">
    <property type="entry name" value="U2 SNRNP AUXILIARY FACTOR, SMALL SUBUNIT"/>
    <property type="match status" value="1"/>
</dbReference>
<dbReference type="Pfam" id="PF00076">
    <property type="entry name" value="RRM_1"/>
    <property type="match status" value="1"/>
</dbReference>
<dbReference type="Pfam" id="PF00642">
    <property type="entry name" value="zf-CCCH"/>
    <property type="match status" value="2"/>
</dbReference>
<dbReference type="PRINTS" id="PR01848">
    <property type="entry name" value="U2AUXFACTOR"/>
</dbReference>
<dbReference type="SMART" id="SM00361">
    <property type="entry name" value="RRM_1"/>
    <property type="match status" value="1"/>
</dbReference>
<dbReference type="SMART" id="SM00356">
    <property type="entry name" value="ZnF_C3H1"/>
    <property type="match status" value="2"/>
</dbReference>
<dbReference type="SUPFAM" id="SSF54928">
    <property type="entry name" value="RNA-binding domain, RBD"/>
    <property type="match status" value="1"/>
</dbReference>
<dbReference type="PROSITE" id="PS50102">
    <property type="entry name" value="RRM"/>
    <property type="match status" value="1"/>
</dbReference>
<dbReference type="PROSITE" id="PS50103">
    <property type="entry name" value="ZF_C3H1"/>
    <property type="match status" value="2"/>
</dbReference>
<gene>
    <name evidence="9 11" type="primary">U2AF35A</name>
    <name type="synonym">AUSA</name>
    <name evidence="10" type="synonym">C3H8</name>
    <name evidence="13" type="ordered locus">At1g27650</name>
    <name evidence="14" type="ORF">T17H3.14</name>
    <name evidence="15" type="ORF">T22C5.10</name>
</gene>
<comment type="function">
    <text evidence="1">Necessary for the splicing of pre-mRNA (By similarity). Probably active at the 3' splice sites.</text>
</comment>
<comment type="subunit">
    <text evidence="6">Component of the spliceosome. Homo- and heterodimer. Interacts with U2AF35B, RNU1 and SR45.</text>
</comment>
<comment type="interaction">
    <interactant intactId="EBI-15193047">
        <id>Q9S709</id>
    </interactant>
    <interactant intactId="EBI-25522131">
        <id>F4ILE1</id>
        <label>At2g16940</label>
    </interactant>
    <organismsDiffer>false</organismsDiffer>
    <experiments>3</experiments>
</comment>
<comment type="subcellular location">
    <subcellularLocation>
        <location evidence="5 6 7 8">Nucleus speckle</location>
    </subcellularLocation>
    <text evidence="7 8">Colocalizes in nuclear speckles with DRT111/RSN2/SFPS.</text>
</comment>
<comment type="alternative products">
    <event type="alternative splicing"/>
    <isoform>
        <id>Q9S709-1</id>
        <name>1</name>
        <sequence type="displayed"/>
    </isoform>
    <text>A number of isoforms are produced. According to EST sequences.</text>
</comment>
<comment type="similarity">
    <text evidence="12">Belongs to the splicing factor SR family.</text>
</comment>
<sequence>MAEHLASIFGTEKDRVNCPFYFKIGACRHGDRCSRLHNRPTISPTLLLSNMYQRPDMITPGVDAQGQPLDPRKIQEHFEDFFEDLFEELGKFGEIESLNICDNLADHMIGNVYVQFKEEDQAAAALQALQGRFYSGRPIIADFSPVTDFREATCRQYEENNCNRGGYCNFMHVKLVSRELRRKLFGRYRRSYRRGSRSRSRSRSISPRNKRDNDRRDPSHREFSHRDRDREFYRHGSGKRSSERSERQERDGSRGRRQASPKRGGSPGGGREGSEERRARIEQWNREREEKEEGGA</sequence>
<reference key="1">
    <citation type="journal article" date="2006" name="Plant Physiol.">
        <title>Molecular characterization and phylogeny of U2AF35 homologs in plants.</title>
        <authorList>
            <person name="Wang B.-B."/>
            <person name="Brendel V."/>
        </authorList>
    </citation>
    <scope>NUCLEOTIDE SEQUENCE [MRNA]</scope>
    <scope>SUBCELLULAR LOCATION</scope>
    <source>
        <strain>cv. Columbia</strain>
        <tissue>Root</tissue>
    </source>
</reference>
<reference key="2">
    <citation type="journal article" date="2000" name="Nature">
        <title>Sequence and analysis of chromosome 1 of the plant Arabidopsis thaliana.</title>
        <authorList>
            <person name="Theologis A."/>
            <person name="Ecker J.R."/>
            <person name="Palm C.J."/>
            <person name="Federspiel N.A."/>
            <person name="Kaul S."/>
            <person name="White O."/>
            <person name="Alonso J."/>
            <person name="Altafi H."/>
            <person name="Araujo R."/>
            <person name="Bowman C.L."/>
            <person name="Brooks S.Y."/>
            <person name="Buehler E."/>
            <person name="Chan A."/>
            <person name="Chao Q."/>
            <person name="Chen H."/>
            <person name="Cheuk R.F."/>
            <person name="Chin C.W."/>
            <person name="Chung M.K."/>
            <person name="Conn L."/>
            <person name="Conway A.B."/>
            <person name="Conway A.R."/>
            <person name="Creasy T.H."/>
            <person name="Dewar K."/>
            <person name="Dunn P."/>
            <person name="Etgu P."/>
            <person name="Feldblyum T.V."/>
            <person name="Feng J.-D."/>
            <person name="Fong B."/>
            <person name="Fujii C.Y."/>
            <person name="Gill J.E."/>
            <person name="Goldsmith A.D."/>
            <person name="Haas B."/>
            <person name="Hansen N.F."/>
            <person name="Hughes B."/>
            <person name="Huizar L."/>
            <person name="Hunter J.L."/>
            <person name="Jenkins J."/>
            <person name="Johnson-Hopson C."/>
            <person name="Khan S."/>
            <person name="Khaykin E."/>
            <person name="Kim C.J."/>
            <person name="Koo H.L."/>
            <person name="Kremenetskaia I."/>
            <person name="Kurtz D.B."/>
            <person name="Kwan A."/>
            <person name="Lam B."/>
            <person name="Langin-Hooper S."/>
            <person name="Lee A."/>
            <person name="Lee J.M."/>
            <person name="Lenz C.A."/>
            <person name="Li J.H."/>
            <person name="Li Y.-P."/>
            <person name="Lin X."/>
            <person name="Liu S.X."/>
            <person name="Liu Z.A."/>
            <person name="Luros J.S."/>
            <person name="Maiti R."/>
            <person name="Marziali A."/>
            <person name="Militscher J."/>
            <person name="Miranda M."/>
            <person name="Nguyen M."/>
            <person name="Nierman W.C."/>
            <person name="Osborne B.I."/>
            <person name="Pai G."/>
            <person name="Peterson J."/>
            <person name="Pham P.K."/>
            <person name="Rizzo M."/>
            <person name="Rooney T."/>
            <person name="Rowley D."/>
            <person name="Sakano H."/>
            <person name="Salzberg S.L."/>
            <person name="Schwartz J.R."/>
            <person name="Shinn P."/>
            <person name="Southwick A.M."/>
            <person name="Sun H."/>
            <person name="Tallon L.J."/>
            <person name="Tambunga G."/>
            <person name="Toriumi M.J."/>
            <person name="Town C.D."/>
            <person name="Utterback T."/>
            <person name="Van Aken S."/>
            <person name="Vaysberg M."/>
            <person name="Vysotskaia V.S."/>
            <person name="Walker M."/>
            <person name="Wu D."/>
            <person name="Yu G."/>
            <person name="Fraser C.M."/>
            <person name="Venter J.C."/>
            <person name="Davis R.W."/>
        </authorList>
    </citation>
    <scope>NUCLEOTIDE SEQUENCE [LARGE SCALE GENOMIC DNA]</scope>
    <source>
        <strain>cv. Columbia</strain>
    </source>
</reference>
<reference key="3">
    <citation type="journal article" date="2017" name="Plant J.">
        <title>Araport11: a complete reannotation of the Arabidopsis thaliana reference genome.</title>
        <authorList>
            <person name="Cheng C.Y."/>
            <person name="Krishnakumar V."/>
            <person name="Chan A.P."/>
            <person name="Thibaud-Nissen F."/>
            <person name="Schobel S."/>
            <person name="Town C.D."/>
        </authorList>
    </citation>
    <scope>GENOME REANNOTATION</scope>
    <source>
        <strain>cv. Columbia</strain>
    </source>
</reference>
<reference key="4">
    <citation type="journal article" date="2003" name="Science">
        <title>Empirical analysis of transcriptional activity in the Arabidopsis genome.</title>
        <authorList>
            <person name="Yamada K."/>
            <person name="Lim J."/>
            <person name="Dale J.M."/>
            <person name="Chen H."/>
            <person name="Shinn P."/>
            <person name="Palm C.J."/>
            <person name="Southwick A.M."/>
            <person name="Wu H.C."/>
            <person name="Kim C.J."/>
            <person name="Nguyen M."/>
            <person name="Pham P.K."/>
            <person name="Cheuk R.F."/>
            <person name="Karlin-Newmann G."/>
            <person name="Liu S.X."/>
            <person name="Lam B."/>
            <person name="Sakano H."/>
            <person name="Wu T."/>
            <person name="Yu G."/>
            <person name="Miranda M."/>
            <person name="Quach H.L."/>
            <person name="Tripp M."/>
            <person name="Chang C.H."/>
            <person name="Lee J.M."/>
            <person name="Toriumi M.J."/>
            <person name="Chan M.M."/>
            <person name="Tang C.C."/>
            <person name="Onodera C.S."/>
            <person name="Deng J.M."/>
            <person name="Akiyama K."/>
            <person name="Ansari Y."/>
            <person name="Arakawa T."/>
            <person name="Banh J."/>
            <person name="Banno F."/>
            <person name="Bowser L."/>
            <person name="Brooks S.Y."/>
            <person name="Carninci P."/>
            <person name="Chao Q."/>
            <person name="Choy N."/>
            <person name="Enju A."/>
            <person name="Goldsmith A.D."/>
            <person name="Gurjal M."/>
            <person name="Hansen N.F."/>
            <person name="Hayashizaki Y."/>
            <person name="Johnson-Hopson C."/>
            <person name="Hsuan V.W."/>
            <person name="Iida K."/>
            <person name="Karnes M."/>
            <person name="Khan S."/>
            <person name="Koesema E."/>
            <person name="Ishida J."/>
            <person name="Jiang P.X."/>
            <person name="Jones T."/>
            <person name="Kawai J."/>
            <person name="Kamiya A."/>
            <person name="Meyers C."/>
            <person name="Nakajima M."/>
            <person name="Narusaka M."/>
            <person name="Seki M."/>
            <person name="Sakurai T."/>
            <person name="Satou M."/>
            <person name="Tamse R."/>
            <person name="Vaysberg M."/>
            <person name="Wallender E.K."/>
            <person name="Wong C."/>
            <person name="Yamamura Y."/>
            <person name="Yuan S."/>
            <person name="Shinozaki K."/>
            <person name="Davis R.W."/>
            <person name="Theologis A."/>
            <person name="Ecker J.R."/>
        </authorList>
    </citation>
    <scope>NUCLEOTIDE SEQUENCE [LARGE SCALE MRNA]</scope>
    <source>
        <strain>cv. Columbia</strain>
    </source>
</reference>
<reference key="5">
    <citation type="submission" date="2002-03" db="EMBL/GenBank/DDBJ databases">
        <title>Full-length cDNA from Arabidopsis thaliana.</title>
        <authorList>
            <person name="Brover V.V."/>
            <person name="Troukhan M.E."/>
            <person name="Alexandrov N.A."/>
            <person name="Lu Y.-P."/>
            <person name="Flavell R.B."/>
            <person name="Feldmann K.A."/>
        </authorList>
    </citation>
    <scope>NUCLEOTIDE SEQUENCE [LARGE SCALE MRNA]</scope>
</reference>
<reference key="6">
    <citation type="journal article" date="2008" name="BMC Genomics">
        <title>Genome-wide analysis of CCCH zinc finger family in Arabidopsis and rice.</title>
        <authorList>
            <person name="Wang D."/>
            <person name="Guo Y."/>
            <person name="Wu C."/>
            <person name="Yang G."/>
            <person name="Li Y."/>
            <person name="Zheng C."/>
        </authorList>
    </citation>
    <scope>NOMENCLATURE</scope>
</reference>
<reference key="7">
    <citation type="journal article" date="2012" name="Plant J.">
        <title>Interactions of SR45, an SR-like protein, with spliceosomal proteins and an intronic sequence: insights into regulated splicing.</title>
        <authorList>
            <person name="Day I.S."/>
            <person name="Golovkin M."/>
            <person name="Palusa S.G."/>
            <person name="Link A."/>
            <person name="Ali G.S."/>
            <person name="Thomas J."/>
            <person name="Richardson D.N."/>
            <person name="Reddy A.S."/>
        </authorList>
    </citation>
    <scope>INTERACTION WITH RNU1; SR45 AND U2AF35B</scope>
    <scope>SUBCELLULAR LOCATION</scope>
</reference>
<reference key="8">
    <citation type="journal article" date="2017" name="Proc. Natl. Acad. Sci. U.S.A.">
        <title>SPF45-related splicing factor for phytochrome signaling promotes photomorphogenesis by regulating pre-mRNA splicing in Arabidopsis.</title>
        <authorList>
            <person name="Xin R."/>
            <person name="Zhu L."/>
            <person name="Salome P.A."/>
            <person name="Mancini E."/>
            <person name="Marshall C.M."/>
            <person name="Harmon F.G."/>
            <person name="Yanovsky M.J."/>
            <person name="Weigel D."/>
            <person name="Huq E."/>
        </authorList>
    </citation>
    <scope>SUBCELLULAR LOCATION</scope>
    <source>
        <strain>cv. Columbia</strain>
    </source>
</reference>
<reference key="9">
    <citation type="journal article" date="2022" name="Proc. Natl. Acad. Sci. U.S.A.">
        <title>SWAP1-SFPS-RRC1 splicing factor complex modulates pre-mRNA splicing to promote photomorphogenesis in Arabidopsis.</title>
        <authorList>
            <person name="Kathare P.K."/>
            <person name="Xin R."/>
            <person name="Ganesan A.S."/>
            <person name="June V.M."/>
            <person name="Reddy A.S.N."/>
            <person name="Huq E."/>
        </authorList>
    </citation>
    <scope>SUBCELLULAR LOCATION</scope>
    <source>
        <strain>cv. Columbia</strain>
    </source>
</reference>